<protein>
    <recommendedName>
        <fullName>Aryl hydrocarbon receptor repressor</fullName>
        <shortName>AhR repressor</shortName>
        <shortName>AhRR</shortName>
    </recommendedName>
</protein>
<dbReference type="EMBL" id="AB015140">
    <property type="protein sequence ID" value="BAA37132.1"/>
    <property type="molecule type" value="mRNA"/>
</dbReference>
<dbReference type="EMBL" id="AK154152">
    <property type="protein sequence ID" value="BAE32410.1"/>
    <property type="molecule type" value="mRNA"/>
</dbReference>
<dbReference type="EMBL" id="AK154761">
    <property type="protein sequence ID" value="BAE32810.1"/>
    <property type="molecule type" value="mRNA"/>
</dbReference>
<dbReference type="EMBL" id="AK155711">
    <property type="protein sequence ID" value="BAE33396.1"/>
    <property type="molecule type" value="mRNA"/>
</dbReference>
<dbReference type="EMBL" id="AC123833">
    <property type="status" value="NOT_ANNOTATED_CDS"/>
    <property type="molecule type" value="Genomic_DNA"/>
</dbReference>
<dbReference type="EMBL" id="CT009486">
    <property type="status" value="NOT_ANNOTATED_CDS"/>
    <property type="molecule type" value="Genomic_DNA"/>
</dbReference>
<dbReference type="EMBL" id="BC118534">
    <property type="protein sequence ID" value="AAI18535.1"/>
    <property type="molecule type" value="mRNA"/>
</dbReference>
<dbReference type="EMBL" id="AK173134">
    <property type="protein sequence ID" value="BAD32412.1"/>
    <property type="molecule type" value="mRNA"/>
</dbReference>
<dbReference type="CCDS" id="CCDS26641.1">
    <molecule id="Q3U1U7-1"/>
</dbReference>
<dbReference type="CCDS" id="CCDS84037.1">
    <molecule id="Q3U1U7-2"/>
</dbReference>
<dbReference type="RefSeq" id="NP_001304280.1">
    <property type="nucleotide sequence ID" value="NM_001317351.1"/>
</dbReference>
<dbReference type="RefSeq" id="NP_033774.1">
    <property type="nucleotide sequence ID" value="NM_009644.3"/>
</dbReference>
<dbReference type="RefSeq" id="XP_006517111.1">
    <property type="nucleotide sequence ID" value="XM_006517048.1"/>
</dbReference>
<dbReference type="RefSeq" id="XP_006517112.1">
    <property type="nucleotide sequence ID" value="XM_006517049.3"/>
</dbReference>
<dbReference type="RefSeq" id="XP_006517113.1">
    <property type="nucleotide sequence ID" value="XM_006517050.2"/>
</dbReference>
<dbReference type="SMR" id="Q3U1U7"/>
<dbReference type="BioGRID" id="198038">
    <property type="interactions" value="4"/>
</dbReference>
<dbReference type="CORUM" id="Q3U1U7"/>
<dbReference type="FunCoup" id="Q3U1U7">
    <property type="interactions" value="510"/>
</dbReference>
<dbReference type="STRING" id="10090.ENSMUSP00000022059"/>
<dbReference type="iPTMnet" id="Q3U1U7"/>
<dbReference type="PhosphoSitePlus" id="Q3U1U7"/>
<dbReference type="PaxDb" id="10090-ENSMUSP00000022059"/>
<dbReference type="ProteomicsDB" id="281958">
    <molecule id="Q3U1U7-1"/>
</dbReference>
<dbReference type="ProteomicsDB" id="281959">
    <molecule id="Q3U1U7-2"/>
</dbReference>
<dbReference type="ProteomicsDB" id="281960">
    <molecule id="Q3U1U7-3"/>
</dbReference>
<dbReference type="DNASU" id="11624"/>
<dbReference type="GeneID" id="11624"/>
<dbReference type="KEGG" id="mmu:11624"/>
<dbReference type="UCSC" id="uc007rev.1">
    <molecule id="Q3U1U7-1"/>
    <property type="organism name" value="mouse"/>
</dbReference>
<dbReference type="UCSC" id="uc007rex.1">
    <molecule id="Q3U1U7-3"/>
    <property type="organism name" value="mouse"/>
</dbReference>
<dbReference type="AGR" id="MGI:1333776"/>
<dbReference type="CTD" id="57491"/>
<dbReference type="MGI" id="MGI:1333776">
    <property type="gene designation" value="Ahrr"/>
</dbReference>
<dbReference type="eggNOG" id="KOG3560">
    <property type="taxonomic scope" value="Eukaryota"/>
</dbReference>
<dbReference type="InParanoid" id="Q3U1U7"/>
<dbReference type="OrthoDB" id="7788762at2759"/>
<dbReference type="PhylomeDB" id="Q3U1U7"/>
<dbReference type="TreeFam" id="TF352074"/>
<dbReference type="Reactome" id="R-MMU-211945">
    <property type="pathway name" value="Phase I - Functionalization of compounds"/>
</dbReference>
<dbReference type="Reactome" id="R-MMU-211976">
    <property type="pathway name" value="Endogenous sterols"/>
</dbReference>
<dbReference type="Reactome" id="R-MMU-211981">
    <property type="pathway name" value="Xenobiotics"/>
</dbReference>
<dbReference type="Reactome" id="R-MMU-8937144">
    <property type="pathway name" value="Aryl hydrocarbon receptor signalling"/>
</dbReference>
<dbReference type="BioGRID-ORCS" id="11624">
    <property type="hits" value="2 hits in 76 CRISPR screens"/>
</dbReference>
<dbReference type="ChiTaRS" id="Cyp1a1">
    <property type="organism name" value="mouse"/>
</dbReference>
<dbReference type="PRO" id="PR:Q3U1U7"/>
<dbReference type="Proteomes" id="UP000000589">
    <property type="component" value="Unplaced"/>
</dbReference>
<dbReference type="RNAct" id="Q3U1U7">
    <property type="molecule type" value="protein"/>
</dbReference>
<dbReference type="GO" id="GO:0005737">
    <property type="term" value="C:cytoplasm"/>
    <property type="evidence" value="ECO:0007669"/>
    <property type="project" value="UniProtKB-SubCell"/>
</dbReference>
<dbReference type="GO" id="GO:0005634">
    <property type="term" value="C:nucleus"/>
    <property type="evidence" value="ECO:0000314"/>
    <property type="project" value="BHF-UCL"/>
</dbReference>
<dbReference type="GO" id="GO:0003677">
    <property type="term" value="F:DNA binding"/>
    <property type="evidence" value="ECO:0007669"/>
    <property type="project" value="UniProtKB-KW"/>
</dbReference>
<dbReference type="GO" id="GO:0046983">
    <property type="term" value="F:protein dimerization activity"/>
    <property type="evidence" value="ECO:0007669"/>
    <property type="project" value="InterPro"/>
</dbReference>
<dbReference type="GO" id="GO:0045892">
    <property type="term" value="P:negative regulation of DNA-templated transcription"/>
    <property type="evidence" value="ECO:0000314"/>
    <property type="project" value="BHF-UCL"/>
</dbReference>
<dbReference type="GO" id="GO:0000122">
    <property type="term" value="P:negative regulation of transcription by RNA polymerase II"/>
    <property type="evidence" value="ECO:0000314"/>
    <property type="project" value="BHF-UCL"/>
</dbReference>
<dbReference type="GO" id="GO:0033235">
    <property type="term" value="P:positive regulation of protein sumoylation"/>
    <property type="evidence" value="ECO:0000314"/>
    <property type="project" value="BHF-UCL"/>
</dbReference>
<dbReference type="GO" id="GO:0009410">
    <property type="term" value="P:response to xenobiotic stimulus"/>
    <property type="evidence" value="ECO:0000305"/>
    <property type="project" value="BHF-UCL"/>
</dbReference>
<dbReference type="GO" id="GO:0006805">
    <property type="term" value="P:xenobiotic metabolic process"/>
    <property type="evidence" value="ECO:0000304"/>
    <property type="project" value="MGI"/>
</dbReference>
<dbReference type="CDD" id="cd11435">
    <property type="entry name" value="bHLH-PAS_AhRR"/>
    <property type="match status" value="1"/>
</dbReference>
<dbReference type="CDD" id="cd00130">
    <property type="entry name" value="PAS"/>
    <property type="match status" value="1"/>
</dbReference>
<dbReference type="FunFam" id="3.30.450.20:FF:000056">
    <property type="entry name" value="aryl hydrocarbon receptor repressor"/>
    <property type="match status" value="1"/>
</dbReference>
<dbReference type="FunFam" id="4.10.280.10:FF:000041">
    <property type="entry name" value="aryl hydrocarbon receptor repressor"/>
    <property type="match status" value="1"/>
</dbReference>
<dbReference type="Gene3D" id="4.10.280.10">
    <property type="entry name" value="Helix-loop-helix DNA-binding domain"/>
    <property type="match status" value="1"/>
</dbReference>
<dbReference type="Gene3D" id="3.30.450.20">
    <property type="entry name" value="PAS domain"/>
    <property type="match status" value="1"/>
</dbReference>
<dbReference type="InterPro" id="IPR039091">
    <property type="entry name" value="AHR/AHRR"/>
</dbReference>
<dbReference type="InterPro" id="IPR039092">
    <property type="entry name" value="AHRR_bHLH"/>
</dbReference>
<dbReference type="InterPro" id="IPR011598">
    <property type="entry name" value="bHLH_dom"/>
</dbReference>
<dbReference type="InterPro" id="IPR036638">
    <property type="entry name" value="HLH_DNA-bd_sf"/>
</dbReference>
<dbReference type="InterPro" id="IPR000014">
    <property type="entry name" value="PAS"/>
</dbReference>
<dbReference type="InterPro" id="IPR035965">
    <property type="entry name" value="PAS-like_dom_sf"/>
</dbReference>
<dbReference type="InterPro" id="IPR013767">
    <property type="entry name" value="PAS_fold"/>
</dbReference>
<dbReference type="PANTHER" id="PTHR10649">
    <property type="entry name" value="ARYL HYDROCARBON RECEPTOR"/>
    <property type="match status" value="1"/>
</dbReference>
<dbReference type="PANTHER" id="PTHR10649:SF3">
    <property type="entry name" value="ARYL HYDROCARBON RECEPTOR REPRESSOR"/>
    <property type="match status" value="1"/>
</dbReference>
<dbReference type="Pfam" id="PF00010">
    <property type="entry name" value="HLH"/>
    <property type="match status" value="1"/>
</dbReference>
<dbReference type="Pfam" id="PF00989">
    <property type="entry name" value="PAS"/>
    <property type="match status" value="1"/>
</dbReference>
<dbReference type="SMART" id="SM00353">
    <property type="entry name" value="HLH"/>
    <property type="match status" value="1"/>
</dbReference>
<dbReference type="SMART" id="SM00091">
    <property type="entry name" value="PAS"/>
    <property type="match status" value="1"/>
</dbReference>
<dbReference type="SUPFAM" id="SSF47459">
    <property type="entry name" value="HLH, helix-loop-helix DNA-binding domain"/>
    <property type="match status" value="1"/>
</dbReference>
<dbReference type="SUPFAM" id="SSF55785">
    <property type="entry name" value="PYP-like sensor domain (PAS domain)"/>
    <property type="match status" value="1"/>
</dbReference>
<dbReference type="PROSITE" id="PS50888">
    <property type="entry name" value="BHLH"/>
    <property type="match status" value="1"/>
</dbReference>
<dbReference type="PROSITE" id="PS50112">
    <property type="entry name" value="PAS"/>
    <property type="match status" value="1"/>
</dbReference>
<feature type="chain" id="PRO_0000333858" description="Aryl hydrocarbon receptor repressor">
    <location>
        <begin position="1"/>
        <end position="701"/>
    </location>
</feature>
<feature type="domain" description="bHLH" evidence="3">
    <location>
        <begin position="25"/>
        <end position="78"/>
    </location>
</feature>
<feature type="domain" description="PAS" evidence="2">
    <location>
        <begin position="106"/>
        <end position="176"/>
    </location>
</feature>
<feature type="region of interest" description="Disordered" evidence="4">
    <location>
        <begin position="409"/>
        <end position="432"/>
    </location>
</feature>
<feature type="region of interest" description="Needed for transcriptional repression">
    <location>
        <begin position="555"/>
        <end position="701"/>
    </location>
</feature>
<feature type="compositionally biased region" description="Polar residues" evidence="4">
    <location>
        <begin position="409"/>
        <end position="430"/>
    </location>
</feature>
<feature type="cross-link" description="Glycyl lysine isopeptide (Lys-Gly) (interchain with G-Cter in SUMO2)" evidence="1">
    <location>
        <position position="583"/>
    </location>
</feature>
<feature type="cross-link" description="Glycyl lysine isopeptide (Lys-Gly) (interchain with G-Cter in SUMO2)" evidence="1">
    <location>
        <position position="660"/>
    </location>
</feature>
<feature type="splice variant" id="VSP_033565" description="In isoform 2." evidence="9">
    <location>
        <begin position="1"/>
        <end position="128"/>
    </location>
</feature>
<feature type="splice variant" id="VSP_033566" description="In isoform 3." evidence="8">
    <location>
        <begin position="300"/>
        <end position="701"/>
    </location>
</feature>
<feature type="sequence conflict" description="In Ref. 2; BAE32810." evidence="10" ref="2">
    <original>I</original>
    <variation>V</variation>
    <location>
        <position position="3"/>
    </location>
</feature>
<feature type="sequence conflict" description="In Ref. 1; BAA37132, 2; BAE32410/BAE32810 and 4; AAI18535." evidence="10" ref="1 2 4">
    <original>L</original>
    <variation>F</variation>
    <location>
        <position position="637"/>
    </location>
</feature>
<keyword id="KW-0025">Alternative splicing</keyword>
<keyword id="KW-0963">Cytoplasm</keyword>
<keyword id="KW-0238">DNA-binding</keyword>
<keyword id="KW-1017">Isopeptide bond</keyword>
<keyword id="KW-0539">Nucleus</keyword>
<keyword id="KW-1185">Reference proteome</keyword>
<keyword id="KW-0804">Transcription</keyword>
<keyword id="KW-0805">Transcription regulation</keyword>
<keyword id="KW-0832">Ubl conjugation</keyword>
<gene>
    <name type="primary">Ahrr</name>
    <name type="synonym">Kiaa1234</name>
</gene>
<organism>
    <name type="scientific">Mus musculus</name>
    <name type="common">Mouse</name>
    <dbReference type="NCBI Taxonomy" id="10090"/>
    <lineage>
        <taxon>Eukaryota</taxon>
        <taxon>Metazoa</taxon>
        <taxon>Chordata</taxon>
        <taxon>Craniata</taxon>
        <taxon>Vertebrata</taxon>
        <taxon>Euteleostomi</taxon>
        <taxon>Mammalia</taxon>
        <taxon>Eutheria</taxon>
        <taxon>Euarchontoglires</taxon>
        <taxon>Glires</taxon>
        <taxon>Rodentia</taxon>
        <taxon>Myomorpha</taxon>
        <taxon>Muroidea</taxon>
        <taxon>Muridae</taxon>
        <taxon>Murinae</taxon>
        <taxon>Mus</taxon>
        <taxon>Mus</taxon>
    </lineage>
</organism>
<sequence>MMIPSGECTYAGRKRRKPIQKRRLTMGAEKSNPSKRHRDRLNTELDHLASLLPFSPDIISKLDKLSVLRLSVSYLRVKSFFQALQETCVWSAPALSPEEHSYRGFPVQEGRLLLESLNGFALVVSAEGMIFYASATIVDYLGFHQTDVMHQNIYDYIHVDDRQDFCRQLHWAMDPPQVVFGQSPHADTDNTVLGKLLRAQEGGKGLPSEYSAFLTRCFICRVRCLLDSTSGFLTMQFQGKLKFLFGQKKKTPSGTALPPRLSLFCIVAPVLPSVTEMKMKSTFLKAKHRADIVVTMDSRAKAVTSLCESELHPKLNYLAGKSNGENGISLFRGQTDRSHWARALARSSCLCLRGGPDLLDPKGTSGDREEEDQKHILRRSPGAWGQREMHKYSYGLETPVHLRHLNWSTEQRSQESTTKLTRQPSKNEPSTCLVPHGSCVPYPGSQGMLSASNMASFRDSLDHPTGAYCSQMNRPLSDIHQGQVDPSTCHISQGSLGSRIPLTGMQRFTARGFSTEDAKLPSLPVTIGTPCNPVLSLDVPIKMENESGSQDIVEASTTSCLWLGTSDMARGHLVGFPARMHLKTEPDYRQQACTPHLGHGMLGTNPYSRDTVGSCREHAPLYSAHCTCLDPEPPHHLFMCSHSESQHPSLDQDCRAPIVKREPLDSPSWAAPGQVTVPRMFPKSASKTVIPSKGSDGIFLP</sequence>
<name>AHRR_MOUSE</name>
<accession>Q3U1U7</accession>
<accession>Q147Z5</accession>
<accession>Q3U3H6</accession>
<accession>Q69ZN4</accession>
<accession>Q9Z312</accession>
<comment type="function">
    <text evidence="6 7">Mediates dioxin toxicity and is involved in regulation of cell growth and differentiation. Represses the transcription activity of AHR by competing with this transcription factor for heterodimer formation with the ARNT and subsequently binding to the xenobiotic response element (XRE) sequence present in the promoter regulatory region of variety of genes. Represses CYP1A1 by binding the XRE sequence and recruiting ANKRA2, HDAC4 and/or HDAC5. Autoregulates its expression by associating with its own XRE site.</text>
</comment>
<comment type="subunit">
    <text evidence="1 6 7">Interacts with ARNT, ANKRA2, HDAC4 and HDAC5. Interacts with ARNT; forms a heterodimer with ARNT (By similarity).</text>
</comment>
<comment type="subcellular location">
    <subcellularLocation>
        <location evidence="7">Cytoplasm</location>
    </subcellularLocation>
    <subcellularLocation>
        <location evidence="3 7">Nucleus</location>
    </subcellularLocation>
    <text>Predominantly in the nuclear compartment. First cytoplasmic, translocates into the nuclear compartment upon interaction with ARNT in the cytoplasmic compartment.</text>
</comment>
<comment type="alternative products">
    <event type="alternative splicing"/>
    <isoform>
        <id>Q3U1U7-1</id>
        <name>1</name>
        <sequence type="displayed"/>
    </isoform>
    <isoform>
        <id>Q3U1U7-2</id>
        <name>2</name>
        <sequence type="described" ref="VSP_033565"/>
    </isoform>
    <isoform>
        <id>Q3U1U7-3</id>
        <name>3</name>
        <sequence type="described" ref="VSP_033566"/>
    </isoform>
</comment>
<comment type="induction">
    <text evidence="5 7">By 3MC. Up-regulated by 2,3,7,8-tetrachlorodibenzo-p-dioxin (TCDD) and beta-naphthoflavone in pituitary.</text>
</comment>
<reference key="1">
    <citation type="journal article" date="1999" name="Genes Dev.">
        <title>Identification of a novel mechanism of regulation of Ah (dioxin) receptor function.</title>
        <authorList>
            <person name="Mimura J."/>
            <person name="Ema M."/>
            <person name="Sogawa K."/>
            <person name="Fujii-Kuriyama Y."/>
        </authorList>
    </citation>
    <scope>NUCLEOTIDE SEQUENCE [MRNA] (ISOFORM 1)</scope>
    <scope>FUNCTION</scope>
    <scope>INTERACTION WITH ARNT</scope>
    <scope>SUBCELLULAR LOCATION</scope>
    <scope>INDUCTION</scope>
    <source>
        <strain>C57BL/6J</strain>
        <tissue>Intestine</tissue>
    </source>
</reference>
<reference key="2">
    <citation type="journal article" date="2005" name="Science">
        <title>The transcriptional landscape of the mammalian genome.</title>
        <authorList>
            <person name="Carninci P."/>
            <person name="Kasukawa T."/>
            <person name="Katayama S."/>
            <person name="Gough J."/>
            <person name="Frith M.C."/>
            <person name="Maeda N."/>
            <person name="Oyama R."/>
            <person name="Ravasi T."/>
            <person name="Lenhard B."/>
            <person name="Wells C."/>
            <person name="Kodzius R."/>
            <person name="Shimokawa K."/>
            <person name="Bajic V.B."/>
            <person name="Brenner S.E."/>
            <person name="Batalov S."/>
            <person name="Forrest A.R."/>
            <person name="Zavolan M."/>
            <person name="Davis M.J."/>
            <person name="Wilming L.G."/>
            <person name="Aidinis V."/>
            <person name="Allen J.E."/>
            <person name="Ambesi-Impiombato A."/>
            <person name="Apweiler R."/>
            <person name="Aturaliya R.N."/>
            <person name="Bailey T.L."/>
            <person name="Bansal M."/>
            <person name="Baxter L."/>
            <person name="Beisel K.W."/>
            <person name="Bersano T."/>
            <person name="Bono H."/>
            <person name="Chalk A.M."/>
            <person name="Chiu K.P."/>
            <person name="Choudhary V."/>
            <person name="Christoffels A."/>
            <person name="Clutterbuck D.R."/>
            <person name="Crowe M.L."/>
            <person name="Dalla E."/>
            <person name="Dalrymple B.P."/>
            <person name="de Bono B."/>
            <person name="Della Gatta G."/>
            <person name="di Bernardo D."/>
            <person name="Down T."/>
            <person name="Engstrom P."/>
            <person name="Fagiolini M."/>
            <person name="Faulkner G."/>
            <person name="Fletcher C.F."/>
            <person name="Fukushima T."/>
            <person name="Furuno M."/>
            <person name="Futaki S."/>
            <person name="Gariboldi M."/>
            <person name="Georgii-Hemming P."/>
            <person name="Gingeras T.R."/>
            <person name="Gojobori T."/>
            <person name="Green R.E."/>
            <person name="Gustincich S."/>
            <person name="Harbers M."/>
            <person name="Hayashi Y."/>
            <person name="Hensch T.K."/>
            <person name="Hirokawa N."/>
            <person name="Hill D."/>
            <person name="Huminiecki L."/>
            <person name="Iacono M."/>
            <person name="Ikeo K."/>
            <person name="Iwama A."/>
            <person name="Ishikawa T."/>
            <person name="Jakt M."/>
            <person name="Kanapin A."/>
            <person name="Katoh M."/>
            <person name="Kawasawa Y."/>
            <person name="Kelso J."/>
            <person name="Kitamura H."/>
            <person name="Kitano H."/>
            <person name="Kollias G."/>
            <person name="Krishnan S.P."/>
            <person name="Kruger A."/>
            <person name="Kummerfeld S.K."/>
            <person name="Kurochkin I.V."/>
            <person name="Lareau L.F."/>
            <person name="Lazarevic D."/>
            <person name="Lipovich L."/>
            <person name="Liu J."/>
            <person name="Liuni S."/>
            <person name="McWilliam S."/>
            <person name="Madan Babu M."/>
            <person name="Madera M."/>
            <person name="Marchionni L."/>
            <person name="Matsuda H."/>
            <person name="Matsuzawa S."/>
            <person name="Miki H."/>
            <person name="Mignone F."/>
            <person name="Miyake S."/>
            <person name="Morris K."/>
            <person name="Mottagui-Tabar S."/>
            <person name="Mulder N."/>
            <person name="Nakano N."/>
            <person name="Nakauchi H."/>
            <person name="Ng P."/>
            <person name="Nilsson R."/>
            <person name="Nishiguchi S."/>
            <person name="Nishikawa S."/>
            <person name="Nori F."/>
            <person name="Ohara O."/>
            <person name="Okazaki Y."/>
            <person name="Orlando V."/>
            <person name="Pang K.C."/>
            <person name="Pavan W.J."/>
            <person name="Pavesi G."/>
            <person name="Pesole G."/>
            <person name="Petrovsky N."/>
            <person name="Piazza S."/>
            <person name="Reed J."/>
            <person name="Reid J.F."/>
            <person name="Ring B.Z."/>
            <person name="Ringwald M."/>
            <person name="Rost B."/>
            <person name="Ruan Y."/>
            <person name="Salzberg S.L."/>
            <person name="Sandelin A."/>
            <person name="Schneider C."/>
            <person name="Schoenbach C."/>
            <person name="Sekiguchi K."/>
            <person name="Semple C.A."/>
            <person name="Seno S."/>
            <person name="Sessa L."/>
            <person name="Sheng Y."/>
            <person name="Shibata Y."/>
            <person name="Shimada H."/>
            <person name="Shimada K."/>
            <person name="Silva D."/>
            <person name="Sinclair B."/>
            <person name="Sperling S."/>
            <person name="Stupka E."/>
            <person name="Sugiura K."/>
            <person name="Sultana R."/>
            <person name="Takenaka Y."/>
            <person name="Taki K."/>
            <person name="Tammoja K."/>
            <person name="Tan S.L."/>
            <person name="Tang S."/>
            <person name="Taylor M.S."/>
            <person name="Tegner J."/>
            <person name="Teichmann S.A."/>
            <person name="Ueda H.R."/>
            <person name="van Nimwegen E."/>
            <person name="Verardo R."/>
            <person name="Wei C.L."/>
            <person name="Yagi K."/>
            <person name="Yamanishi H."/>
            <person name="Zabarovsky E."/>
            <person name="Zhu S."/>
            <person name="Zimmer A."/>
            <person name="Hide W."/>
            <person name="Bult C."/>
            <person name="Grimmond S.M."/>
            <person name="Teasdale R.D."/>
            <person name="Liu E.T."/>
            <person name="Brusic V."/>
            <person name="Quackenbush J."/>
            <person name="Wahlestedt C."/>
            <person name="Mattick J.S."/>
            <person name="Hume D.A."/>
            <person name="Kai C."/>
            <person name="Sasaki D."/>
            <person name="Tomaru Y."/>
            <person name="Fukuda S."/>
            <person name="Kanamori-Katayama M."/>
            <person name="Suzuki M."/>
            <person name="Aoki J."/>
            <person name="Arakawa T."/>
            <person name="Iida J."/>
            <person name="Imamura K."/>
            <person name="Itoh M."/>
            <person name="Kato T."/>
            <person name="Kawaji H."/>
            <person name="Kawagashira N."/>
            <person name="Kawashima T."/>
            <person name="Kojima M."/>
            <person name="Kondo S."/>
            <person name="Konno H."/>
            <person name="Nakano K."/>
            <person name="Ninomiya N."/>
            <person name="Nishio T."/>
            <person name="Okada M."/>
            <person name="Plessy C."/>
            <person name="Shibata K."/>
            <person name="Shiraki T."/>
            <person name="Suzuki S."/>
            <person name="Tagami M."/>
            <person name="Waki K."/>
            <person name="Watahiki A."/>
            <person name="Okamura-Oho Y."/>
            <person name="Suzuki H."/>
            <person name="Kawai J."/>
            <person name="Hayashizaki Y."/>
        </authorList>
    </citation>
    <scope>NUCLEOTIDE SEQUENCE [LARGE SCALE MRNA] (ISOFORM 1)</scope>
    <source>
        <strain>C57BL/6J</strain>
    </source>
</reference>
<reference key="3">
    <citation type="journal article" date="2009" name="PLoS Biol.">
        <title>Lineage-specific biology revealed by a finished genome assembly of the mouse.</title>
        <authorList>
            <person name="Church D.M."/>
            <person name="Goodstadt L."/>
            <person name="Hillier L.W."/>
            <person name="Zody M.C."/>
            <person name="Goldstein S."/>
            <person name="She X."/>
            <person name="Bult C.J."/>
            <person name="Agarwala R."/>
            <person name="Cherry J.L."/>
            <person name="DiCuccio M."/>
            <person name="Hlavina W."/>
            <person name="Kapustin Y."/>
            <person name="Meric P."/>
            <person name="Maglott D."/>
            <person name="Birtle Z."/>
            <person name="Marques A.C."/>
            <person name="Graves T."/>
            <person name="Zhou S."/>
            <person name="Teague B."/>
            <person name="Potamousis K."/>
            <person name="Churas C."/>
            <person name="Place M."/>
            <person name="Herschleb J."/>
            <person name="Runnheim R."/>
            <person name="Forrest D."/>
            <person name="Amos-Landgraf J."/>
            <person name="Schwartz D.C."/>
            <person name="Cheng Z."/>
            <person name="Lindblad-Toh K."/>
            <person name="Eichler E.E."/>
            <person name="Ponting C.P."/>
        </authorList>
    </citation>
    <scope>NUCLEOTIDE SEQUENCE [LARGE SCALE GENOMIC DNA]</scope>
    <source>
        <strain>C57BL/6J</strain>
    </source>
</reference>
<reference key="4">
    <citation type="journal article" date="2004" name="Genome Res.">
        <title>The status, quality, and expansion of the NIH full-length cDNA project: the Mammalian Gene Collection (MGC).</title>
        <authorList>
            <consortium name="The MGC Project Team"/>
        </authorList>
    </citation>
    <scope>NUCLEOTIDE SEQUENCE [LARGE SCALE MRNA] (ISOFORM 2)</scope>
</reference>
<reference key="5">
    <citation type="journal article" date="2004" name="DNA Res.">
        <title>Prediction of the coding sequences of mouse homologues of KIAA gene: IV. The complete nucleotide sequences of 500 mouse KIAA-homologous cDNAs identified by screening of terminal sequences of cDNA clones randomly sampled from size-fractionated libraries.</title>
        <authorList>
            <person name="Okazaki N."/>
            <person name="Kikuno R."/>
            <person name="Ohara R."/>
            <person name="Inamoto S."/>
            <person name="Koseki H."/>
            <person name="Hiraoka S."/>
            <person name="Saga Y."/>
            <person name="Seino S."/>
            <person name="Nishimura M."/>
            <person name="Kaisho T."/>
            <person name="Hoshino K."/>
            <person name="Kitamura H."/>
            <person name="Nagase T."/>
            <person name="Ohara O."/>
            <person name="Koga H."/>
        </authorList>
    </citation>
    <scope>NUCLEOTIDE SEQUENCE [LARGE SCALE MRNA] OF 92-701 (ISOFORM 3)</scope>
    <source>
        <tissue>Fetal brain</tissue>
    </source>
</reference>
<reference key="6">
    <citation type="journal article" date="2002" name="NeuroToxicology">
        <title>Constitutive and TCDD-induced expression of Ah receptor-responsive genes in the pituitary.</title>
        <authorList>
            <person name="Huang P."/>
            <person name="Ceccatelli S."/>
            <person name="Haakansson H."/>
            <person name="Grandison L."/>
            <person name="Rannug A."/>
        </authorList>
    </citation>
    <scope>INDUCTION</scope>
</reference>
<reference key="7">
    <citation type="journal article" date="2007" name="Biochem. Biophys. Res. Commun.">
        <title>Molecular mechanism of transcriptional repression of AhR repressor involving ANKRA2, HDAC4, and HDAC5.</title>
        <authorList>
            <person name="Oshima M."/>
            <person name="Mimura J."/>
            <person name="Yamamoto M."/>
            <person name="Fujii-Kuriyama Y."/>
        </authorList>
    </citation>
    <scope>FUNCTION</scope>
    <scope>INTERACTION WITH ANKRA2; HDAC4 AND HDAC5</scope>
</reference>
<evidence type="ECO:0000250" key="1">
    <source>
        <dbReference type="UniProtKB" id="A9YTQ3"/>
    </source>
</evidence>
<evidence type="ECO:0000255" key="2">
    <source>
        <dbReference type="PROSITE-ProRule" id="PRU00140"/>
    </source>
</evidence>
<evidence type="ECO:0000255" key="3">
    <source>
        <dbReference type="PROSITE-ProRule" id="PRU00981"/>
    </source>
</evidence>
<evidence type="ECO:0000256" key="4">
    <source>
        <dbReference type="SAM" id="MobiDB-lite"/>
    </source>
</evidence>
<evidence type="ECO:0000269" key="5">
    <source>
    </source>
</evidence>
<evidence type="ECO:0000269" key="6">
    <source>
    </source>
</evidence>
<evidence type="ECO:0000269" key="7">
    <source>
    </source>
</evidence>
<evidence type="ECO:0000303" key="8">
    <source>
    </source>
</evidence>
<evidence type="ECO:0000303" key="9">
    <source>
    </source>
</evidence>
<evidence type="ECO:0000305" key="10"/>
<proteinExistence type="evidence at protein level"/>